<dbReference type="PIR" id="JN0380">
    <property type="entry name" value="JN0380"/>
</dbReference>
<dbReference type="SMR" id="P16344"/>
<dbReference type="MEROPS" id="I02.061"/>
<dbReference type="GO" id="GO:0005615">
    <property type="term" value="C:extracellular space"/>
    <property type="evidence" value="ECO:0007669"/>
    <property type="project" value="TreeGrafter"/>
</dbReference>
<dbReference type="GO" id="GO:0042151">
    <property type="term" value="C:nematocyst"/>
    <property type="evidence" value="ECO:0007669"/>
    <property type="project" value="UniProtKB-SubCell"/>
</dbReference>
<dbReference type="GO" id="GO:0004867">
    <property type="term" value="F:serine-type endopeptidase inhibitor activity"/>
    <property type="evidence" value="ECO:0007669"/>
    <property type="project" value="UniProtKB-KW"/>
</dbReference>
<dbReference type="CDD" id="cd22618">
    <property type="entry name" value="Kunitz_SHPI"/>
    <property type="match status" value="1"/>
</dbReference>
<dbReference type="FunFam" id="4.10.410.10:FF:000021">
    <property type="entry name" value="Serine protease inhibitor, putative"/>
    <property type="match status" value="1"/>
</dbReference>
<dbReference type="Gene3D" id="4.10.410.10">
    <property type="entry name" value="Pancreatic trypsin inhibitor Kunitz domain"/>
    <property type="match status" value="1"/>
</dbReference>
<dbReference type="InterPro" id="IPR002223">
    <property type="entry name" value="Kunitz_BPTI"/>
</dbReference>
<dbReference type="InterPro" id="IPR036880">
    <property type="entry name" value="Kunitz_BPTI_sf"/>
</dbReference>
<dbReference type="InterPro" id="IPR050098">
    <property type="entry name" value="TFPI/VKTCI-like"/>
</dbReference>
<dbReference type="PANTHER" id="PTHR10083:SF381">
    <property type="entry name" value="BPTI_KUNITZ INHIBITOR DOMAIN-CONTAINING PROTEIN"/>
    <property type="match status" value="1"/>
</dbReference>
<dbReference type="PANTHER" id="PTHR10083">
    <property type="entry name" value="KUNITZ-TYPE PROTEASE INHIBITOR-RELATED"/>
    <property type="match status" value="1"/>
</dbReference>
<dbReference type="Pfam" id="PF00014">
    <property type="entry name" value="Kunitz_BPTI"/>
    <property type="match status" value="1"/>
</dbReference>
<dbReference type="PRINTS" id="PR00759">
    <property type="entry name" value="BASICPTASE"/>
</dbReference>
<dbReference type="SMART" id="SM00131">
    <property type="entry name" value="KU"/>
    <property type="match status" value="1"/>
</dbReference>
<dbReference type="SUPFAM" id="SSF57362">
    <property type="entry name" value="BPTI-like"/>
    <property type="match status" value="1"/>
</dbReference>
<dbReference type="PROSITE" id="PS50279">
    <property type="entry name" value="BPTI_KUNITZ_2"/>
    <property type="match status" value="1"/>
</dbReference>
<comment type="function">
    <text evidence="3">Serine protease inhibitor that acts on trypsin.</text>
</comment>
<comment type="subcellular location">
    <subcellularLocation>
        <location evidence="3">Secreted</location>
    </subcellularLocation>
    <subcellularLocation>
        <location evidence="6">Nematocyst</location>
    </subcellularLocation>
</comment>
<comment type="miscellaneous">
    <text evidence="6">A synonymy between H.magnifica and R.crispa is controversial.</text>
</comment>
<comment type="similarity">
    <text evidence="6">Belongs to the venom Kunitz-type family. Sea anemone type 2 potassium channel toxin subfamily.</text>
</comment>
<organism>
    <name type="scientific">Radianthus crispa</name>
    <name type="common">Leathery sea anemone</name>
    <name type="synonym">Heteractis crispa</name>
    <dbReference type="NCBI Taxonomy" id="3122430"/>
    <lineage>
        <taxon>Eukaryota</taxon>
        <taxon>Metazoa</taxon>
        <taxon>Cnidaria</taxon>
        <taxon>Anthozoa</taxon>
        <taxon>Hexacorallia</taxon>
        <taxon>Actiniaria</taxon>
        <taxon>Stichodactylidae</taxon>
        <taxon>Radianthus</taxon>
    </lineage>
</organism>
<accession>P16344</accession>
<reference key="1">
    <citation type="journal article" date="1985" name="Bioorg. Khim.">
        <title>Amino-acid sequence of trypsin inhibitor IV from Radiantis macrodactylus.</title>
        <authorList>
            <person name="Zykova T.A."/>
            <person name="Vinokurov L.M."/>
            <person name="Markova L.F."/>
            <person name="Kozlovskaya E.P."/>
            <person name="Elyakov G.B."/>
        </authorList>
    </citation>
    <scope>PROTEIN SEQUENCE</scope>
    <scope>FUNCTION</scope>
    <scope>SUBCELLULAR LOCATION</scope>
</reference>
<reference key="2">
    <citation type="journal article" date="2012" name="Toxicon">
        <title>Development of a rational nomenclature for naming peptide and protein toxins from sea anemones.</title>
        <authorList>
            <person name="Oliveira J.S."/>
            <person name="Fuentes-Silva D."/>
            <person name="King G.F."/>
        </authorList>
    </citation>
    <scope>NOMENCLATURE</scope>
</reference>
<protein>
    <recommendedName>
        <fullName evidence="4">PI-stichotoxin-Hcr2a</fullName>
        <shortName evidence="4">PI-SHTX-Hcr2a</shortName>
    </recommendedName>
    <alternativeName>
        <fullName evidence="5">Kunitz-type trypsin inhibitor IV</fullName>
        <shortName>Jn-IV</shortName>
    </alternativeName>
</protein>
<keyword id="KW-0903">Direct protein sequencing</keyword>
<keyword id="KW-1015">Disulfide bond</keyword>
<keyword id="KW-0166">Nematocyst</keyword>
<keyword id="KW-0646">Protease inhibitor</keyword>
<keyword id="KW-0964">Secreted</keyword>
<keyword id="KW-0722">Serine protease inhibitor</keyword>
<name>VKT2A_RADCR</name>
<evidence type="ECO:0000250" key="1">
    <source>
        <dbReference type="UniProtKB" id="P31713"/>
    </source>
</evidence>
<evidence type="ECO:0000255" key="2">
    <source>
        <dbReference type="PROSITE-ProRule" id="PRU00031"/>
    </source>
</evidence>
<evidence type="ECO:0000269" key="3">
    <source ref="1"/>
</evidence>
<evidence type="ECO:0000303" key="4">
    <source>
    </source>
</evidence>
<evidence type="ECO:0000303" key="5">
    <source ref="1"/>
</evidence>
<evidence type="ECO:0000305" key="6"/>
<proteinExistence type="evidence at protein level"/>
<feature type="chain" id="PRO_0000155418" description="PI-stichotoxin-Hcr2a" evidence="3">
    <location>
        <begin position="1"/>
        <end position="56"/>
    </location>
</feature>
<feature type="domain" description="BPTI/Kunitz inhibitor" evidence="2">
    <location>
        <begin position="4"/>
        <end position="54"/>
    </location>
</feature>
<feature type="site" description="Reactive bond for trypsin" evidence="1">
    <location>
        <begin position="14"/>
        <end position="15"/>
    </location>
</feature>
<feature type="disulfide bond" evidence="1">
    <location>
        <begin position="4"/>
        <end position="54"/>
    </location>
</feature>
<feature type="disulfide bond" evidence="1">
    <location>
        <begin position="13"/>
        <end position="37"/>
    </location>
</feature>
<feature type="disulfide bond" evidence="1">
    <location>
        <begin position="29"/>
        <end position="50"/>
    </location>
</feature>
<sequence>GSICLEPKVVGPCTAYFPRFYFDSETGKCTPFIYGGCEGNSYVDEKLHACRAICRA</sequence>